<keyword id="KW-0010">Activator</keyword>
<keyword id="KW-0469">Meiosis</keyword>
<keyword id="KW-0597">Phosphoprotein</keyword>
<keyword id="KW-1185">Reference proteome</keyword>
<keyword id="KW-0677">Repeat</keyword>
<keyword id="KW-0694">RNA-binding</keyword>
<keyword id="KW-0804">Transcription</keyword>
<keyword id="KW-0805">Transcription regulation</keyword>
<name>AML1_ARATH</name>
<dbReference type="EMBL" id="D86122">
    <property type="protein sequence ID" value="BAA22374.1"/>
    <property type="status" value="ALT_SEQ"/>
    <property type="molecule type" value="mRNA"/>
</dbReference>
<dbReference type="EMBL" id="AB022212">
    <property type="protein sequence ID" value="BAB08883.1"/>
    <property type="status" value="ALT_FRAME"/>
    <property type="molecule type" value="Genomic_DNA"/>
</dbReference>
<dbReference type="EMBL" id="CP002688">
    <property type="protein sequence ID" value="AED97542.1"/>
    <property type="molecule type" value="Genomic_DNA"/>
</dbReference>
<dbReference type="EMBL" id="CP002688">
    <property type="protein sequence ID" value="AED97543.1"/>
    <property type="molecule type" value="Genomic_DNA"/>
</dbReference>
<dbReference type="EMBL" id="CP002688">
    <property type="protein sequence ID" value="ANM69060.1"/>
    <property type="molecule type" value="Genomic_DNA"/>
</dbReference>
<dbReference type="EMBL" id="CP002688">
    <property type="protein sequence ID" value="ANM69062.1"/>
    <property type="molecule type" value="Genomic_DNA"/>
</dbReference>
<dbReference type="EMBL" id="AY062536">
    <property type="protein sequence ID" value="AAL32614.1"/>
    <property type="molecule type" value="mRNA"/>
</dbReference>
<dbReference type="EMBL" id="BT008806">
    <property type="protein sequence ID" value="AAP68245.1"/>
    <property type="molecule type" value="mRNA"/>
</dbReference>
<dbReference type="EMBL" id="AK316683">
    <property type="protein sequence ID" value="BAH19410.1"/>
    <property type="molecule type" value="mRNA"/>
</dbReference>
<dbReference type="RefSeq" id="NP_001032122.1">
    <property type="nucleotide sequence ID" value="NM_001037045.1"/>
</dbReference>
<dbReference type="RefSeq" id="NP_001318861.1">
    <property type="nucleotide sequence ID" value="NM_001345511.1"/>
</dbReference>
<dbReference type="RefSeq" id="NP_001330765.1">
    <property type="nucleotide sequence ID" value="NM_001345512.1"/>
</dbReference>
<dbReference type="RefSeq" id="NP_568946.1">
    <property type="nucleotide sequence ID" value="NM_125589.5"/>
</dbReference>
<dbReference type="SMR" id="Q8W4I9"/>
<dbReference type="BioGRID" id="21561">
    <property type="interactions" value="1"/>
</dbReference>
<dbReference type="FunCoup" id="Q8W4I9">
    <property type="interactions" value="250"/>
</dbReference>
<dbReference type="IntAct" id="Q8W4I9">
    <property type="interactions" value="1"/>
</dbReference>
<dbReference type="STRING" id="3702.Q8W4I9"/>
<dbReference type="GlyGen" id="Q8W4I9">
    <property type="glycosylation" value="3 sites, 1 O-linked glycan (3 sites)"/>
</dbReference>
<dbReference type="iPTMnet" id="Q8W4I9"/>
<dbReference type="PaxDb" id="3702-AT5G61960.1"/>
<dbReference type="ProteomicsDB" id="244401"/>
<dbReference type="EnsemblPlants" id="AT5G61960.1">
    <property type="protein sequence ID" value="AT5G61960.1"/>
    <property type="gene ID" value="AT5G61960"/>
</dbReference>
<dbReference type="EnsemblPlants" id="AT5G61960.10">
    <property type="protein sequence ID" value="AT5G61960.10"/>
    <property type="gene ID" value="AT5G61960"/>
</dbReference>
<dbReference type="EnsemblPlants" id="AT5G61960.2">
    <property type="protein sequence ID" value="AT5G61960.2"/>
    <property type="gene ID" value="AT5G61960"/>
</dbReference>
<dbReference type="EnsemblPlants" id="AT5G61960.3">
    <property type="protein sequence ID" value="AT5G61960.3"/>
    <property type="gene ID" value="AT5G61960"/>
</dbReference>
<dbReference type="GeneID" id="836317"/>
<dbReference type="Gramene" id="AT5G61960.1">
    <property type="protein sequence ID" value="AT5G61960.1"/>
    <property type="gene ID" value="AT5G61960"/>
</dbReference>
<dbReference type="Gramene" id="AT5G61960.10">
    <property type="protein sequence ID" value="AT5G61960.10"/>
    <property type="gene ID" value="AT5G61960"/>
</dbReference>
<dbReference type="Gramene" id="AT5G61960.2">
    <property type="protein sequence ID" value="AT5G61960.2"/>
    <property type="gene ID" value="AT5G61960"/>
</dbReference>
<dbReference type="Gramene" id="AT5G61960.3">
    <property type="protein sequence ID" value="AT5G61960.3"/>
    <property type="gene ID" value="AT5G61960"/>
</dbReference>
<dbReference type="KEGG" id="ath:AT5G61960"/>
<dbReference type="Araport" id="AT5G61960"/>
<dbReference type="TAIR" id="AT5G61960">
    <property type="gene designation" value="ML1"/>
</dbReference>
<dbReference type="eggNOG" id="KOG4660">
    <property type="taxonomic scope" value="Eukaryota"/>
</dbReference>
<dbReference type="HOGENOM" id="CLU_012447_1_0_1"/>
<dbReference type="InParanoid" id="Q8W4I9"/>
<dbReference type="PhylomeDB" id="Q8W4I9"/>
<dbReference type="PRO" id="PR:Q8W4I9"/>
<dbReference type="Proteomes" id="UP000006548">
    <property type="component" value="Chromosome 5"/>
</dbReference>
<dbReference type="ExpressionAtlas" id="Q8W4I9">
    <property type="expression patterns" value="baseline and differential"/>
</dbReference>
<dbReference type="GO" id="GO:0003729">
    <property type="term" value="F:mRNA binding"/>
    <property type="evidence" value="ECO:0000314"/>
    <property type="project" value="TAIR"/>
</dbReference>
<dbReference type="GO" id="GO:0051321">
    <property type="term" value="P:meiotic cell cycle"/>
    <property type="evidence" value="ECO:0007669"/>
    <property type="project" value="UniProtKB-KW"/>
</dbReference>
<dbReference type="CDD" id="cd12524">
    <property type="entry name" value="RRM1_MEI2_like"/>
    <property type="match status" value="1"/>
</dbReference>
<dbReference type="CDD" id="cd12276">
    <property type="entry name" value="RRM2_MEI2_EAR1_like"/>
    <property type="match status" value="1"/>
</dbReference>
<dbReference type="CDD" id="cd12531">
    <property type="entry name" value="RRM3_MEI2_like"/>
    <property type="match status" value="1"/>
</dbReference>
<dbReference type="FunFam" id="3.30.70.330:FF:000101">
    <property type="entry name" value="Protein MEI2-like 1"/>
    <property type="match status" value="1"/>
</dbReference>
<dbReference type="FunFam" id="3.30.70.330:FF:000349">
    <property type="entry name" value="Protein MEI2-like 1"/>
    <property type="match status" value="1"/>
</dbReference>
<dbReference type="Gene3D" id="3.30.70.330">
    <property type="match status" value="2"/>
</dbReference>
<dbReference type="InterPro" id="IPR034453">
    <property type="entry name" value="MEI2-like_RRM1"/>
</dbReference>
<dbReference type="InterPro" id="IPR034454">
    <property type="entry name" value="MEI2-like_RRM3"/>
</dbReference>
<dbReference type="InterPro" id="IPR007201">
    <property type="entry name" value="Mei2-like_Rrm_C"/>
</dbReference>
<dbReference type="InterPro" id="IPR012677">
    <property type="entry name" value="Nucleotide-bd_a/b_plait_sf"/>
</dbReference>
<dbReference type="InterPro" id="IPR035979">
    <property type="entry name" value="RBD_domain_sf"/>
</dbReference>
<dbReference type="InterPro" id="IPR000504">
    <property type="entry name" value="RRM_dom"/>
</dbReference>
<dbReference type="PANTHER" id="PTHR23189">
    <property type="entry name" value="RNA RECOGNITION MOTIF-CONTAINING"/>
    <property type="match status" value="1"/>
</dbReference>
<dbReference type="Pfam" id="PF00076">
    <property type="entry name" value="RRM_1"/>
    <property type="match status" value="2"/>
</dbReference>
<dbReference type="Pfam" id="PF04059">
    <property type="entry name" value="RRM_2"/>
    <property type="match status" value="1"/>
</dbReference>
<dbReference type="SMART" id="SM00360">
    <property type="entry name" value="RRM"/>
    <property type="match status" value="2"/>
</dbReference>
<dbReference type="SUPFAM" id="SSF54928">
    <property type="entry name" value="RNA-binding domain, RBD"/>
    <property type="match status" value="2"/>
</dbReference>
<dbReference type="PROSITE" id="PS50102">
    <property type="entry name" value="RRM"/>
    <property type="match status" value="2"/>
</dbReference>
<protein>
    <recommendedName>
        <fullName>Protein MEI2-like 1</fullName>
        <shortName>AML1</shortName>
    </recommendedName>
    <alternativeName>
        <fullName>MEI2-like protein 1</fullName>
    </alternativeName>
</protein>
<sequence>MPSDIMEQRGVSTPSHFHEDIHITSERQFGFMKTDMMPENQGGRDRLSSMPKSSWTSESYQLKPQSSFSGSHPSGSPNARNTTNGSQWESSLFSSSMSDLFSRKLRLQGSDMLSTMSANTVVTHREEEPSESLEEIEAQTIGNLLPDEDDLFAEVTGEVGRKSRANTGDELDEFDLFSSVGGMELDGDIFSSVSHRNGERGGNNSVGELNRGEIPSRTLLVGNISSNVEDYELKVLFEQFGDIQALHTACKNRGFIMVSYCDIRAAQNAARALQNKLLRGTKLDIRYSISKENPSQKDTSKGALLVNNLDSSISNQELNRLVKSYGEVKEIRRTMHDNSQIYIEFFDVRAAAAALGGLNGLEVAGKKLQLVPTYPEGTRYTSQCAANDTEGCLPKTSYSNTSSGHIGRHFPGMISSTSSDGGSMRVIHNSIGSPVNSFIERHRSLSIPIGFPPSANGISASKPVGLQEHGHHFDNSNMGIQSMPNLHPHSFSEYVDNFANGSPYTSSAFSEMVSDGSKANEGFMIHNVRGVEGFSGGGIGSPMHQSSRRPINLWSNSNTQQQNPSSGMMWPNSPSHINSIPTQRPPVTVFSRAPPIMVNMASSPVHHHIGSAPVLNSPFWDRRQAYVAESLESSGFHIGSHGSMGIPGSSPSHPMDIGSHKTFSVGGNRMDVNSQNAVLRSPQQLSHLFPGRSPMGSMPGSFDSPNERYRNLSHRRSESSSSNADKKLYELDVDRILRGEDRRTTLMIKNIPNKYTSKMLLSAIDEHCKGTYDFLYLPIDFKNKCNVGYAFINLIEPEKIVPFFKAFNGKKWEKFNSEKVATLTYARIQGKTALIAHFQNSSLMNEDKRCRPILFHTDGPNAGDQEPFPMGSNIRSRPGKPRSSSIDNYNSFSISSVSENREETPNGTDPFLKEN</sequence>
<reference key="1">
    <citation type="journal article" date="1997" name="FEBS Lett.">
        <title>Functional cloning of a cDNA encoding Mei2-like protein from Arabidopsis thaliana using a fission yeast pheromone receptor deficient mutant.</title>
        <authorList>
            <person name="Hirayama T."/>
            <person name="Ishida C."/>
            <person name="Kuromori T."/>
            <person name="Obata S."/>
            <person name="Shimoda C."/>
            <person name="Yamamoto M."/>
            <person name="Shinozaki K."/>
            <person name="Ohto C."/>
        </authorList>
    </citation>
    <scope>NUCLEOTIDE SEQUENCE [MRNA]</scope>
    <scope>TISSUE SPECIFICITY</scope>
</reference>
<reference key="2">
    <citation type="journal article" date="2000" name="DNA Res.">
        <title>Structural analysis of Arabidopsis thaliana chromosome 5. X. Sequence features of the regions of 3,076,755 bp covered by sixty P1 and TAC clones.</title>
        <authorList>
            <person name="Sato S."/>
            <person name="Nakamura Y."/>
            <person name="Kaneko T."/>
            <person name="Katoh T."/>
            <person name="Asamizu E."/>
            <person name="Kotani H."/>
            <person name="Tabata S."/>
        </authorList>
    </citation>
    <scope>NUCLEOTIDE SEQUENCE [LARGE SCALE GENOMIC DNA]</scope>
    <source>
        <strain>cv. Columbia</strain>
    </source>
</reference>
<reference key="3">
    <citation type="journal article" date="2017" name="Plant J.">
        <title>Araport11: a complete reannotation of the Arabidopsis thaliana reference genome.</title>
        <authorList>
            <person name="Cheng C.Y."/>
            <person name="Krishnakumar V."/>
            <person name="Chan A.P."/>
            <person name="Thibaud-Nissen F."/>
            <person name="Schobel S."/>
            <person name="Town C.D."/>
        </authorList>
    </citation>
    <scope>GENOME REANNOTATION</scope>
    <source>
        <strain>cv. Columbia</strain>
    </source>
</reference>
<reference key="4">
    <citation type="journal article" date="2003" name="Science">
        <title>Empirical analysis of transcriptional activity in the Arabidopsis genome.</title>
        <authorList>
            <person name="Yamada K."/>
            <person name="Lim J."/>
            <person name="Dale J.M."/>
            <person name="Chen H."/>
            <person name="Shinn P."/>
            <person name="Palm C.J."/>
            <person name="Southwick A.M."/>
            <person name="Wu H.C."/>
            <person name="Kim C.J."/>
            <person name="Nguyen M."/>
            <person name="Pham P.K."/>
            <person name="Cheuk R.F."/>
            <person name="Karlin-Newmann G."/>
            <person name="Liu S.X."/>
            <person name="Lam B."/>
            <person name="Sakano H."/>
            <person name="Wu T."/>
            <person name="Yu G."/>
            <person name="Miranda M."/>
            <person name="Quach H.L."/>
            <person name="Tripp M."/>
            <person name="Chang C.H."/>
            <person name="Lee J.M."/>
            <person name="Toriumi M.J."/>
            <person name="Chan M.M."/>
            <person name="Tang C.C."/>
            <person name="Onodera C.S."/>
            <person name="Deng J.M."/>
            <person name="Akiyama K."/>
            <person name="Ansari Y."/>
            <person name="Arakawa T."/>
            <person name="Banh J."/>
            <person name="Banno F."/>
            <person name="Bowser L."/>
            <person name="Brooks S.Y."/>
            <person name="Carninci P."/>
            <person name="Chao Q."/>
            <person name="Choy N."/>
            <person name="Enju A."/>
            <person name="Goldsmith A.D."/>
            <person name="Gurjal M."/>
            <person name="Hansen N.F."/>
            <person name="Hayashizaki Y."/>
            <person name="Johnson-Hopson C."/>
            <person name="Hsuan V.W."/>
            <person name="Iida K."/>
            <person name="Karnes M."/>
            <person name="Khan S."/>
            <person name="Koesema E."/>
            <person name="Ishida J."/>
            <person name="Jiang P.X."/>
            <person name="Jones T."/>
            <person name="Kawai J."/>
            <person name="Kamiya A."/>
            <person name="Meyers C."/>
            <person name="Nakajima M."/>
            <person name="Narusaka M."/>
            <person name="Seki M."/>
            <person name="Sakurai T."/>
            <person name="Satou M."/>
            <person name="Tamse R."/>
            <person name="Vaysberg M."/>
            <person name="Wallender E.K."/>
            <person name="Wong C."/>
            <person name="Yamamura Y."/>
            <person name="Yuan S."/>
            <person name="Shinozaki K."/>
            <person name="Davis R.W."/>
            <person name="Theologis A."/>
            <person name="Ecker J.R."/>
        </authorList>
    </citation>
    <scope>NUCLEOTIDE SEQUENCE [LARGE SCALE MRNA]</scope>
    <source>
        <strain>cv. Columbia</strain>
    </source>
</reference>
<reference key="5">
    <citation type="journal article" date="2009" name="DNA Res.">
        <title>Analysis of multiple occurrences of alternative splicing events in Arabidopsis thaliana using novel sequenced full-length cDNAs.</title>
        <authorList>
            <person name="Iida K."/>
            <person name="Fukami-Kobayashi K."/>
            <person name="Toyoda A."/>
            <person name="Sakaki Y."/>
            <person name="Kobayashi M."/>
            <person name="Seki M."/>
            <person name="Shinozaki K."/>
        </authorList>
    </citation>
    <scope>NUCLEOTIDE SEQUENCE [LARGE SCALE MRNA]</scope>
    <source>
        <strain>cv. Columbia</strain>
    </source>
</reference>
<reference key="6">
    <citation type="journal article" date="2004" name="Plant Mol. Biol.">
        <title>Diversification of genes encoding mei2 -like RNA binding proteins in plants.</title>
        <authorList>
            <person name="Anderson G.H."/>
            <person name="Alvarez N.D."/>
            <person name="Gilman C."/>
            <person name="Jeffares D.C."/>
            <person name="Trainor V.C."/>
            <person name="Hanson M.R."/>
            <person name="Veit B."/>
        </authorList>
    </citation>
    <scope>GENE FAMILY</scope>
    <scope>DEVELOPMENTAL STAGE</scope>
</reference>
<reference key="7">
    <citation type="journal article" date="2005" name="BMC Plant Biol.">
        <title>The Arabidopsis Mei2 homologue AML1 binds AtRaptor1B, the plant homologue of a major regulator of eukaryotic cell growth.</title>
        <authorList>
            <person name="Anderson G.H."/>
            <person name="Hanson M.R."/>
        </authorList>
    </citation>
    <scope>FUNCTION</scope>
    <scope>INTERACTION WITH RAPTOR1</scope>
    <scope>DISRUPTION PHENOTYPE</scope>
</reference>
<reference key="8">
    <citation type="journal article" date="2006" name="Plant Cell">
        <title>The Arabidopsis-mei2-like genes play a role in meiosis and vegetative growth in Arabidopsis.</title>
        <authorList>
            <person name="Kaur J."/>
            <person name="Sebastian J."/>
            <person name="Siddiqi I."/>
        </authorList>
    </citation>
    <scope>FUNCTION</scope>
    <scope>TISSUE SPECIFICITY</scope>
</reference>
<reference key="9">
    <citation type="journal article" date="2009" name="Plant Physiol.">
        <title>Large-scale Arabidopsis phosphoproteome profiling reveals novel chloroplast kinase substrates and phosphorylation networks.</title>
        <authorList>
            <person name="Reiland S."/>
            <person name="Messerli G."/>
            <person name="Baerenfaller K."/>
            <person name="Gerrits B."/>
            <person name="Endler A."/>
            <person name="Grossmann J."/>
            <person name="Gruissem W."/>
            <person name="Baginsky S."/>
        </authorList>
    </citation>
    <scope>PHOSPHORYLATION [LARGE SCALE ANALYSIS] AT SER-76</scope>
    <scope>IDENTIFICATION BY MASS SPECTROMETRY [LARGE SCALE ANALYSIS]</scope>
</reference>
<feature type="chain" id="PRO_0000409341" description="Protein MEI2-like 1">
    <location>
        <begin position="1"/>
        <end position="915"/>
    </location>
</feature>
<feature type="domain" description="RRM 1" evidence="1">
    <location>
        <begin position="217"/>
        <end position="290"/>
    </location>
</feature>
<feature type="domain" description="RRM 2" evidence="1">
    <location>
        <begin position="302"/>
        <end position="375"/>
    </location>
</feature>
<feature type="region of interest" description="Disordered" evidence="2">
    <location>
        <begin position="1"/>
        <end position="90"/>
    </location>
</feature>
<feature type="region of interest" description="Disordered" evidence="2">
    <location>
        <begin position="690"/>
        <end position="723"/>
    </location>
</feature>
<feature type="region of interest" description="Disordered" evidence="2">
    <location>
        <begin position="854"/>
        <end position="915"/>
    </location>
</feature>
<feature type="compositionally biased region" description="Basic and acidic residues" evidence="2">
    <location>
        <begin position="16"/>
        <end position="25"/>
    </location>
</feature>
<feature type="compositionally biased region" description="Polar residues" evidence="2">
    <location>
        <begin position="50"/>
        <end position="65"/>
    </location>
</feature>
<feature type="compositionally biased region" description="Low complexity" evidence="2">
    <location>
        <begin position="66"/>
        <end position="77"/>
    </location>
</feature>
<feature type="compositionally biased region" description="Polar residues" evidence="2">
    <location>
        <begin position="78"/>
        <end position="89"/>
    </location>
</feature>
<feature type="compositionally biased region" description="Basic and acidic residues" evidence="2">
    <location>
        <begin position="705"/>
        <end position="723"/>
    </location>
</feature>
<feature type="compositionally biased region" description="Polar residues" evidence="2">
    <location>
        <begin position="882"/>
        <end position="898"/>
    </location>
</feature>
<feature type="modified residue" description="Phosphoserine" evidence="8">
    <location>
        <position position="76"/>
    </location>
</feature>
<organism>
    <name type="scientific">Arabidopsis thaliana</name>
    <name type="common">Mouse-ear cress</name>
    <dbReference type="NCBI Taxonomy" id="3702"/>
    <lineage>
        <taxon>Eukaryota</taxon>
        <taxon>Viridiplantae</taxon>
        <taxon>Streptophyta</taxon>
        <taxon>Embryophyta</taxon>
        <taxon>Tracheophyta</taxon>
        <taxon>Spermatophyta</taxon>
        <taxon>Magnoliopsida</taxon>
        <taxon>eudicotyledons</taxon>
        <taxon>Gunneridae</taxon>
        <taxon>Pentapetalae</taxon>
        <taxon>rosids</taxon>
        <taxon>malvids</taxon>
        <taxon>Brassicales</taxon>
        <taxon>Brassicaceae</taxon>
        <taxon>Camelineae</taxon>
        <taxon>Arabidopsis</taxon>
    </lineage>
</organism>
<gene>
    <name type="primary">ML1</name>
    <name type="ordered locus">At5g61960</name>
    <name type="ORF">K22G18.9</name>
</gene>
<comment type="function">
    <text evidence="4 5">Probable RNA-binding transcriptional activator that plays a role in meiosis and vegetative growth. May be a downstream effector of TOR signaling pathway and recruited by RAPTOR1 for TOR substrate.</text>
</comment>
<comment type="tissue specificity">
    <text evidence="5 6">Expressed in roots, shoots, leaves, flowers and siliques.</text>
</comment>
<comment type="developmental stage">
    <text evidence="3">Expressed in the embryo at the heart and torpedo stages. Weakly expressed throughout the vegetative shoot apex. Highly expressed in organogenic regions of floral apices.</text>
</comment>
<comment type="disruption phenotype">
    <text evidence="4">Early flowering.</text>
</comment>
<comment type="sequence caution" evidence="7">
    <conflict type="frameshift">
        <sequence resource="EMBL-CDS" id="BAA22374"/>
    </conflict>
</comment>
<comment type="sequence caution" evidence="7">
    <conflict type="erroneous gene model prediction">
        <sequence resource="EMBL-CDS" id="BAB08883"/>
    </conflict>
</comment>
<proteinExistence type="evidence at protein level"/>
<evidence type="ECO:0000255" key="1">
    <source>
        <dbReference type="PROSITE-ProRule" id="PRU00176"/>
    </source>
</evidence>
<evidence type="ECO:0000256" key="2">
    <source>
        <dbReference type="SAM" id="MobiDB-lite"/>
    </source>
</evidence>
<evidence type="ECO:0000269" key="3">
    <source>
    </source>
</evidence>
<evidence type="ECO:0000269" key="4">
    <source>
    </source>
</evidence>
<evidence type="ECO:0000269" key="5">
    <source>
    </source>
</evidence>
<evidence type="ECO:0000269" key="6">
    <source>
    </source>
</evidence>
<evidence type="ECO:0000305" key="7"/>
<evidence type="ECO:0007744" key="8">
    <source>
    </source>
</evidence>
<accession>Q8W4I9</accession>
<accession>O23866</accession>